<gene>
    <name type="primary">tusD</name>
    <name type="ordered locus">VP2776</name>
</gene>
<proteinExistence type="inferred from homology"/>
<dbReference type="EC" id="2.8.1.-"/>
<dbReference type="EMBL" id="BA000031">
    <property type="protein sequence ID" value="BAC61039.1"/>
    <property type="molecule type" value="Genomic_DNA"/>
</dbReference>
<dbReference type="RefSeq" id="NP_799155.1">
    <property type="nucleotide sequence ID" value="NC_004603.1"/>
</dbReference>
<dbReference type="RefSeq" id="WP_005458288.1">
    <property type="nucleotide sequence ID" value="NC_004603.1"/>
</dbReference>
<dbReference type="SMR" id="Q87L40"/>
<dbReference type="GeneID" id="1190326"/>
<dbReference type="KEGG" id="vpa:VP2776"/>
<dbReference type="PATRIC" id="fig|223926.6.peg.2672"/>
<dbReference type="eggNOG" id="COG1553">
    <property type="taxonomic scope" value="Bacteria"/>
</dbReference>
<dbReference type="HOGENOM" id="CLU_132095_0_0_6"/>
<dbReference type="Proteomes" id="UP000002493">
    <property type="component" value="Chromosome 1"/>
</dbReference>
<dbReference type="GO" id="GO:1990228">
    <property type="term" value="C:sulfurtransferase complex"/>
    <property type="evidence" value="ECO:0007669"/>
    <property type="project" value="TreeGrafter"/>
</dbReference>
<dbReference type="GO" id="GO:0097163">
    <property type="term" value="F:sulfur carrier activity"/>
    <property type="evidence" value="ECO:0007669"/>
    <property type="project" value="TreeGrafter"/>
</dbReference>
<dbReference type="GO" id="GO:0016783">
    <property type="term" value="F:sulfurtransferase activity"/>
    <property type="evidence" value="ECO:0007669"/>
    <property type="project" value="InterPro"/>
</dbReference>
<dbReference type="GO" id="GO:0002143">
    <property type="term" value="P:tRNA wobble position uridine thiolation"/>
    <property type="evidence" value="ECO:0007669"/>
    <property type="project" value="TreeGrafter"/>
</dbReference>
<dbReference type="FunFam" id="3.40.1260.10:FF:000001">
    <property type="entry name" value="Sulfurtransferase TusD"/>
    <property type="match status" value="1"/>
</dbReference>
<dbReference type="Gene3D" id="3.40.1260.10">
    <property type="entry name" value="DsrEFH-like"/>
    <property type="match status" value="1"/>
</dbReference>
<dbReference type="InterPro" id="IPR027396">
    <property type="entry name" value="DsrEFH-like"/>
</dbReference>
<dbReference type="InterPro" id="IPR003787">
    <property type="entry name" value="Sulphur_relay_DsrE/F-like"/>
</dbReference>
<dbReference type="InterPro" id="IPR017463">
    <property type="entry name" value="Sulphur_relay_TusD/DsrE"/>
</dbReference>
<dbReference type="NCBIfam" id="NF001237">
    <property type="entry name" value="PRK00207.1"/>
    <property type="match status" value="1"/>
</dbReference>
<dbReference type="NCBIfam" id="TIGR03012">
    <property type="entry name" value="sulf_tusD_dsrE"/>
    <property type="match status" value="1"/>
</dbReference>
<dbReference type="PANTHER" id="PTHR34874">
    <property type="entry name" value="PROTEIN YCHN"/>
    <property type="match status" value="1"/>
</dbReference>
<dbReference type="PANTHER" id="PTHR34874:SF3">
    <property type="entry name" value="SULFURTRANSFERASE TUSD"/>
    <property type="match status" value="1"/>
</dbReference>
<dbReference type="Pfam" id="PF02635">
    <property type="entry name" value="DsrE"/>
    <property type="match status" value="1"/>
</dbReference>
<dbReference type="SUPFAM" id="SSF75169">
    <property type="entry name" value="DsrEFH-like"/>
    <property type="match status" value="1"/>
</dbReference>
<reference key="1">
    <citation type="journal article" date="2003" name="Lancet">
        <title>Genome sequence of Vibrio parahaemolyticus: a pathogenic mechanism distinct from that of V. cholerae.</title>
        <authorList>
            <person name="Makino K."/>
            <person name="Oshima K."/>
            <person name="Kurokawa K."/>
            <person name="Yokoyama K."/>
            <person name="Uda T."/>
            <person name="Tagomori K."/>
            <person name="Iijima Y."/>
            <person name="Najima M."/>
            <person name="Nakano M."/>
            <person name="Yamashita A."/>
            <person name="Kubota Y."/>
            <person name="Kimura S."/>
            <person name="Yasunaga T."/>
            <person name="Honda T."/>
            <person name="Shinagawa H."/>
            <person name="Hattori M."/>
            <person name="Iida T."/>
        </authorList>
    </citation>
    <scope>NUCLEOTIDE SEQUENCE [LARGE SCALE GENOMIC DNA]</scope>
    <source>
        <strain>RIMD 2210633</strain>
    </source>
</reference>
<feature type="chain" id="PRO_0000214738" description="Sulfurtransferase TusD homolog">
    <location>
        <begin position="1"/>
        <end position="131"/>
    </location>
</feature>
<feature type="active site" description="Cysteine persulfide intermediate" evidence="1">
    <location>
        <position position="81"/>
    </location>
</feature>
<sequence>MGGLTYTLVVNGSVYGSQSARSAYQFAQAVIEQGHTLVSVFFYQDGVTNGTALSVPANDEFDLTKAWQGLAKEHDVRLETCVAAALRRGIISEDEATQHGLTQNNLAEGFVQAGLGSLAEAMLTQDRVVQF</sequence>
<name>TUSD_VIBPA</name>
<evidence type="ECO:0000250" key="1"/>
<evidence type="ECO:0000305" key="2"/>
<accession>Q87L40</accession>
<organism>
    <name type="scientific">Vibrio parahaemolyticus serotype O3:K6 (strain RIMD 2210633)</name>
    <dbReference type="NCBI Taxonomy" id="223926"/>
    <lineage>
        <taxon>Bacteria</taxon>
        <taxon>Pseudomonadati</taxon>
        <taxon>Pseudomonadota</taxon>
        <taxon>Gammaproteobacteria</taxon>
        <taxon>Vibrionales</taxon>
        <taxon>Vibrionaceae</taxon>
        <taxon>Vibrio</taxon>
    </lineage>
</organism>
<comment type="function">
    <text evidence="1">Could be part of a sulfur-relay system.</text>
</comment>
<comment type="subcellular location">
    <subcellularLocation>
        <location evidence="1">Cytoplasm</location>
    </subcellularLocation>
</comment>
<comment type="similarity">
    <text evidence="2">Belongs to the DsrE/TusD family.</text>
</comment>
<protein>
    <recommendedName>
        <fullName>Sulfurtransferase TusD homolog</fullName>
        <ecNumber>2.8.1.-</ecNumber>
    </recommendedName>
</protein>
<keyword id="KW-0963">Cytoplasm</keyword>
<keyword id="KW-0808">Transferase</keyword>